<organism>
    <name type="scientific">Clostridium botulinum (strain Okra / Type B1)</name>
    <dbReference type="NCBI Taxonomy" id="498213"/>
    <lineage>
        <taxon>Bacteria</taxon>
        <taxon>Bacillati</taxon>
        <taxon>Bacillota</taxon>
        <taxon>Clostridia</taxon>
        <taxon>Eubacteriales</taxon>
        <taxon>Clostridiaceae</taxon>
        <taxon>Clostridium</taxon>
    </lineage>
</organism>
<comment type="function">
    <text evidence="1">One of the primary rRNA binding proteins, it binds specifically to the 5'-end of 16S ribosomal RNA.</text>
</comment>
<comment type="subunit">
    <text evidence="1">Part of the 30S ribosomal subunit.</text>
</comment>
<comment type="similarity">
    <text evidence="1">Belongs to the universal ribosomal protein uS17 family.</text>
</comment>
<keyword id="KW-0687">Ribonucleoprotein</keyword>
<keyword id="KW-0689">Ribosomal protein</keyword>
<keyword id="KW-0694">RNA-binding</keyword>
<keyword id="KW-0699">rRNA-binding</keyword>
<name>RS17_CLOBK</name>
<sequence>MERSNRKTRIGRVVSNKMDKTIVVAVETKVRHPLYGKIMNRTTKFKAHDENNAANINDKVSIMETRPLSKQKRWRLVEVVEKAK</sequence>
<gene>
    <name evidence="1" type="primary">rpsQ</name>
    <name type="ordered locus">CLD_1033</name>
</gene>
<accession>B1IGE5</accession>
<feature type="chain" id="PRO_1000143242" description="Small ribosomal subunit protein uS17">
    <location>
        <begin position="1"/>
        <end position="84"/>
    </location>
</feature>
<reference key="1">
    <citation type="journal article" date="2007" name="PLoS ONE">
        <title>Analysis of the neurotoxin complex genes in Clostridium botulinum A1-A4 and B1 strains: BoNT/A3, /Ba4 and /B1 clusters are located within plasmids.</title>
        <authorList>
            <person name="Smith T.J."/>
            <person name="Hill K.K."/>
            <person name="Foley B.T."/>
            <person name="Detter J.C."/>
            <person name="Munk A.C."/>
            <person name="Bruce D.C."/>
            <person name="Doggett N.A."/>
            <person name="Smith L.A."/>
            <person name="Marks J.D."/>
            <person name="Xie G."/>
            <person name="Brettin T.S."/>
        </authorList>
    </citation>
    <scope>NUCLEOTIDE SEQUENCE [LARGE SCALE GENOMIC DNA]</scope>
    <source>
        <strain>Okra / Type B1</strain>
    </source>
</reference>
<proteinExistence type="inferred from homology"/>
<evidence type="ECO:0000255" key="1">
    <source>
        <dbReference type="HAMAP-Rule" id="MF_01345"/>
    </source>
</evidence>
<evidence type="ECO:0000305" key="2"/>
<protein>
    <recommendedName>
        <fullName evidence="1">Small ribosomal subunit protein uS17</fullName>
    </recommendedName>
    <alternativeName>
        <fullName evidence="2">30S ribosomal protein S17</fullName>
    </alternativeName>
</protein>
<dbReference type="EMBL" id="CP000939">
    <property type="protein sequence ID" value="ACA44983.1"/>
    <property type="molecule type" value="Genomic_DNA"/>
</dbReference>
<dbReference type="RefSeq" id="WP_003404492.1">
    <property type="nucleotide sequence ID" value="NC_010516.1"/>
</dbReference>
<dbReference type="SMR" id="B1IGE5"/>
<dbReference type="KEGG" id="cbb:CLD_1033"/>
<dbReference type="HOGENOM" id="CLU_073626_1_0_9"/>
<dbReference type="Proteomes" id="UP000008541">
    <property type="component" value="Chromosome"/>
</dbReference>
<dbReference type="GO" id="GO:0022627">
    <property type="term" value="C:cytosolic small ribosomal subunit"/>
    <property type="evidence" value="ECO:0007669"/>
    <property type="project" value="TreeGrafter"/>
</dbReference>
<dbReference type="GO" id="GO:0019843">
    <property type="term" value="F:rRNA binding"/>
    <property type="evidence" value="ECO:0007669"/>
    <property type="project" value="UniProtKB-UniRule"/>
</dbReference>
<dbReference type="GO" id="GO:0003735">
    <property type="term" value="F:structural constituent of ribosome"/>
    <property type="evidence" value="ECO:0007669"/>
    <property type="project" value="InterPro"/>
</dbReference>
<dbReference type="GO" id="GO:0006412">
    <property type="term" value="P:translation"/>
    <property type="evidence" value="ECO:0007669"/>
    <property type="project" value="UniProtKB-UniRule"/>
</dbReference>
<dbReference type="CDD" id="cd00364">
    <property type="entry name" value="Ribosomal_uS17"/>
    <property type="match status" value="1"/>
</dbReference>
<dbReference type="FunFam" id="2.40.50.140:FF:000026">
    <property type="entry name" value="30S ribosomal protein S17"/>
    <property type="match status" value="1"/>
</dbReference>
<dbReference type="Gene3D" id="2.40.50.140">
    <property type="entry name" value="Nucleic acid-binding proteins"/>
    <property type="match status" value="1"/>
</dbReference>
<dbReference type="HAMAP" id="MF_01345_B">
    <property type="entry name" value="Ribosomal_uS17_B"/>
    <property type="match status" value="1"/>
</dbReference>
<dbReference type="InterPro" id="IPR012340">
    <property type="entry name" value="NA-bd_OB-fold"/>
</dbReference>
<dbReference type="InterPro" id="IPR000266">
    <property type="entry name" value="Ribosomal_uS17"/>
</dbReference>
<dbReference type="InterPro" id="IPR019984">
    <property type="entry name" value="Ribosomal_uS17_bact/chlr"/>
</dbReference>
<dbReference type="NCBIfam" id="NF004123">
    <property type="entry name" value="PRK05610.1"/>
    <property type="match status" value="1"/>
</dbReference>
<dbReference type="NCBIfam" id="TIGR03635">
    <property type="entry name" value="uS17_bact"/>
    <property type="match status" value="1"/>
</dbReference>
<dbReference type="PANTHER" id="PTHR10744">
    <property type="entry name" value="40S RIBOSOMAL PROTEIN S11 FAMILY MEMBER"/>
    <property type="match status" value="1"/>
</dbReference>
<dbReference type="PANTHER" id="PTHR10744:SF1">
    <property type="entry name" value="SMALL RIBOSOMAL SUBUNIT PROTEIN US17M"/>
    <property type="match status" value="1"/>
</dbReference>
<dbReference type="Pfam" id="PF00366">
    <property type="entry name" value="Ribosomal_S17"/>
    <property type="match status" value="1"/>
</dbReference>
<dbReference type="PRINTS" id="PR00973">
    <property type="entry name" value="RIBOSOMALS17"/>
</dbReference>
<dbReference type="SUPFAM" id="SSF50249">
    <property type="entry name" value="Nucleic acid-binding proteins"/>
    <property type="match status" value="1"/>
</dbReference>